<comment type="function">
    <text evidence="1">With S4 and S12 plays an important role in translational accuracy.</text>
</comment>
<comment type="function">
    <text evidence="1">Located at the back of the 30S subunit body where it stabilizes the conformation of the head with respect to the body.</text>
</comment>
<comment type="subunit">
    <text evidence="1">Part of the 30S ribosomal subunit. Contacts proteins S4 and S8.</text>
</comment>
<comment type="domain">
    <text>The N-terminal domain interacts with the head of the 30S subunit; the C-terminal domain interacts with the body and contacts protein S4. The interaction surface between S4 and S5 is involved in control of translational fidelity.</text>
</comment>
<comment type="similarity">
    <text evidence="1">Belongs to the universal ribosomal protein uS5 family.</text>
</comment>
<name>RS5_CLOPE</name>
<accession>Q8XHU0</accession>
<keyword id="KW-1185">Reference proteome</keyword>
<keyword id="KW-0687">Ribonucleoprotein</keyword>
<keyword id="KW-0689">Ribosomal protein</keyword>
<keyword id="KW-0694">RNA-binding</keyword>
<keyword id="KW-0699">rRNA-binding</keyword>
<sequence>MRIDPSTLDLKEKVVSISRVTKVVKGGRNFRFSALVVVGDENGHVGVGTGKSIEIPEAIRKGIEDAKKNLVEVSIVGTTVPHEIHGKFGTGDVLIMPATEGTGVIAGGPARSVLELAGLKDVRAKSLGSNNPRNMVKATINGLANLRTAEDIAKLRGKSVEEIIG</sequence>
<proteinExistence type="inferred from homology"/>
<feature type="chain" id="PRO_0000131503" description="Small ribosomal subunit protein uS5">
    <location>
        <begin position="1"/>
        <end position="165"/>
    </location>
</feature>
<feature type="domain" description="S5 DRBM" evidence="1">
    <location>
        <begin position="10"/>
        <end position="73"/>
    </location>
</feature>
<reference key="1">
    <citation type="journal article" date="2002" name="Proc. Natl. Acad. Sci. U.S.A.">
        <title>Complete genome sequence of Clostridium perfringens, an anaerobic flesh-eater.</title>
        <authorList>
            <person name="Shimizu T."/>
            <person name="Ohtani K."/>
            <person name="Hirakawa H."/>
            <person name="Ohshima K."/>
            <person name="Yamashita A."/>
            <person name="Shiba T."/>
            <person name="Ogasawara N."/>
            <person name="Hattori M."/>
            <person name="Kuhara S."/>
            <person name="Hayashi H."/>
        </authorList>
    </citation>
    <scope>NUCLEOTIDE SEQUENCE [LARGE SCALE GENOMIC DNA]</scope>
    <source>
        <strain>13 / Type A</strain>
    </source>
</reference>
<organism>
    <name type="scientific">Clostridium perfringens (strain 13 / Type A)</name>
    <dbReference type="NCBI Taxonomy" id="195102"/>
    <lineage>
        <taxon>Bacteria</taxon>
        <taxon>Bacillati</taxon>
        <taxon>Bacillota</taxon>
        <taxon>Clostridia</taxon>
        <taxon>Eubacteriales</taxon>
        <taxon>Clostridiaceae</taxon>
        <taxon>Clostridium</taxon>
    </lineage>
</organism>
<gene>
    <name evidence="1" type="primary">rpsE</name>
    <name type="ordered locus">CPE2388</name>
</gene>
<evidence type="ECO:0000255" key="1">
    <source>
        <dbReference type="HAMAP-Rule" id="MF_01307"/>
    </source>
</evidence>
<evidence type="ECO:0000305" key="2"/>
<dbReference type="EMBL" id="BA000016">
    <property type="protein sequence ID" value="BAB82094.1"/>
    <property type="molecule type" value="Genomic_DNA"/>
</dbReference>
<dbReference type="RefSeq" id="WP_003454272.1">
    <property type="nucleotide sequence ID" value="NC_003366.1"/>
</dbReference>
<dbReference type="SMR" id="Q8XHU0"/>
<dbReference type="STRING" id="195102.gene:10491705"/>
<dbReference type="GeneID" id="93001026"/>
<dbReference type="KEGG" id="cpe:CPE2388"/>
<dbReference type="HOGENOM" id="CLU_065898_2_2_9"/>
<dbReference type="Proteomes" id="UP000000818">
    <property type="component" value="Chromosome"/>
</dbReference>
<dbReference type="GO" id="GO:0015935">
    <property type="term" value="C:small ribosomal subunit"/>
    <property type="evidence" value="ECO:0007669"/>
    <property type="project" value="InterPro"/>
</dbReference>
<dbReference type="GO" id="GO:0019843">
    <property type="term" value="F:rRNA binding"/>
    <property type="evidence" value="ECO:0007669"/>
    <property type="project" value="UniProtKB-UniRule"/>
</dbReference>
<dbReference type="GO" id="GO:0003735">
    <property type="term" value="F:structural constituent of ribosome"/>
    <property type="evidence" value="ECO:0007669"/>
    <property type="project" value="InterPro"/>
</dbReference>
<dbReference type="GO" id="GO:0006412">
    <property type="term" value="P:translation"/>
    <property type="evidence" value="ECO:0007669"/>
    <property type="project" value="UniProtKB-UniRule"/>
</dbReference>
<dbReference type="FunFam" id="3.30.160.20:FF:000001">
    <property type="entry name" value="30S ribosomal protein S5"/>
    <property type="match status" value="1"/>
</dbReference>
<dbReference type="FunFam" id="3.30.230.10:FF:000002">
    <property type="entry name" value="30S ribosomal protein S5"/>
    <property type="match status" value="1"/>
</dbReference>
<dbReference type="Gene3D" id="3.30.160.20">
    <property type="match status" value="1"/>
</dbReference>
<dbReference type="Gene3D" id="3.30.230.10">
    <property type="match status" value="1"/>
</dbReference>
<dbReference type="HAMAP" id="MF_01307_B">
    <property type="entry name" value="Ribosomal_uS5_B"/>
    <property type="match status" value="1"/>
</dbReference>
<dbReference type="InterPro" id="IPR020568">
    <property type="entry name" value="Ribosomal_Su5_D2-typ_SF"/>
</dbReference>
<dbReference type="InterPro" id="IPR000851">
    <property type="entry name" value="Ribosomal_uS5"/>
</dbReference>
<dbReference type="InterPro" id="IPR005712">
    <property type="entry name" value="Ribosomal_uS5_bac-type"/>
</dbReference>
<dbReference type="InterPro" id="IPR005324">
    <property type="entry name" value="Ribosomal_uS5_C"/>
</dbReference>
<dbReference type="InterPro" id="IPR013810">
    <property type="entry name" value="Ribosomal_uS5_N"/>
</dbReference>
<dbReference type="InterPro" id="IPR018192">
    <property type="entry name" value="Ribosomal_uS5_N_CS"/>
</dbReference>
<dbReference type="InterPro" id="IPR014721">
    <property type="entry name" value="Ribsml_uS5_D2-typ_fold_subgr"/>
</dbReference>
<dbReference type="NCBIfam" id="TIGR01021">
    <property type="entry name" value="rpsE_bact"/>
    <property type="match status" value="1"/>
</dbReference>
<dbReference type="PANTHER" id="PTHR48277">
    <property type="entry name" value="MITOCHONDRIAL RIBOSOMAL PROTEIN S5"/>
    <property type="match status" value="1"/>
</dbReference>
<dbReference type="PANTHER" id="PTHR48277:SF1">
    <property type="entry name" value="MITOCHONDRIAL RIBOSOMAL PROTEIN S5"/>
    <property type="match status" value="1"/>
</dbReference>
<dbReference type="Pfam" id="PF00333">
    <property type="entry name" value="Ribosomal_S5"/>
    <property type="match status" value="1"/>
</dbReference>
<dbReference type="Pfam" id="PF03719">
    <property type="entry name" value="Ribosomal_S5_C"/>
    <property type="match status" value="1"/>
</dbReference>
<dbReference type="SUPFAM" id="SSF54768">
    <property type="entry name" value="dsRNA-binding domain-like"/>
    <property type="match status" value="1"/>
</dbReference>
<dbReference type="SUPFAM" id="SSF54211">
    <property type="entry name" value="Ribosomal protein S5 domain 2-like"/>
    <property type="match status" value="1"/>
</dbReference>
<dbReference type="PROSITE" id="PS00585">
    <property type="entry name" value="RIBOSOMAL_S5"/>
    <property type="match status" value="1"/>
</dbReference>
<dbReference type="PROSITE" id="PS50881">
    <property type="entry name" value="S5_DSRBD"/>
    <property type="match status" value="1"/>
</dbReference>
<protein>
    <recommendedName>
        <fullName evidence="1">Small ribosomal subunit protein uS5</fullName>
    </recommendedName>
    <alternativeName>
        <fullName evidence="2">30S ribosomal protein S5</fullName>
    </alternativeName>
</protein>